<proteinExistence type="inferred from homology"/>
<organism>
    <name type="scientific">Pyrococcus abyssi (strain GE5 / Orsay)</name>
    <dbReference type="NCBI Taxonomy" id="272844"/>
    <lineage>
        <taxon>Archaea</taxon>
        <taxon>Methanobacteriati</taxon>
        <taxon>Methanobacteriota</taxon>
        <taxon>Thermococci</taxon>
        <taxon>Thermococcales</taxon>
        <taxon>Thermococcaceae</taxon>
        <taxon>Pyrococcus</taxon>
    </lineage>
</organism>
<comment type="function">
    <text evidence="1">Catalyzes the attachment of glycine to tRNA(Gly).</text>
</comment>
<comment type="catalytic activity">
    <reaction evidence="1">
        <text>tRNA(Gly) + glycine + ATP = glycyl-tRNA(Gly) + AMP + diphosphate</text>
        <dbReference type="Rhea" id="RHEA:16013"/>
        <dbReference type="Rhea" id="RHEA-COMP:9664"/>
        <dbReference type="Rhea" id="RHEA-COMP:9683"/>
        <dbReference type="ChEBI" id="CHEBI:30616"/>
        <dbReference type="ChEBI" id="CHEBI:33019"/>
        <dbReference type="ChEBI" id="CHEBI:57305"/>
        <dbReference type="ChEBI" id="CHEBI:78442"/>
        <dbReference type="ChEBI" id="CHEBI:78522"/>
        <dbReference type="ChEBI" id="CHEBI:456215"/>
        <dbReference type="EC" id="6.1.1.14"/>
    </reaction>
</comment>
<comment type="subcellular location">
    <subcellularLocation>
        <location>Cytoplasm</location>
    </subcellularLocation>
</comment>
<comment type="similarity">
    <text evidence="1">Belongs to the class-II aminoacyl-tRNA synthetase family.</text>
</comment>
<gene>
    <name evidence="1" type="primary">glyS</name>
    <name type="ordered locus">PYRAB05520</name>
    <name type="ORF">PAB0380</name>
</gene>
<evidence type="ECO:0000255" key="1">
    <source>
        <dbReference type="HAMAP-Rule" id="MF_00253"/>
    </source>
</evidence>
<feature type="chain" id="PRO_0000072994" description="Glycine--tRNA ligase">
    <location>
        <begin position="1"/>
        <end position="571"/>
    </location>
</feature>
<feature type="binding site" evidence="1">
    <location>
        <position position="99"/>
    </location>
    <ligand>
        <name>substrate</name>
    </ligand>
</feature>
<feature type="binding site" evidence="1">
    <location>
        <position position="165"/>
    </location>
    <ligand>
        <name>substrate</name>
    </ligand>
</feature>
<feature type="binding site" evidence="1">
    <location>
        <begin position="197"/>
        <end position="199"/>
    </location>
    <ligand>
        <name>ATP</name>
        <dbReference type="ChEBI" id="CHEBI:30616"/>
    </ligand>
</feature>
<feature type="binding site" evidence="1">
    <location>
        <begin position="207"/>
        <end position="212"/>
    </location>
    <ligand>
        <name>ATP</name>
        <dbReference type="ChEBI" id="CHEBI:30616"/>
    </ligand>
</feature>
<feature type="binding site" evidence="1">
    <location>
        <begin position="212"/>
        <end position="216"/>
    </location>
    <ligand>
        <name>substrate</name>
    </ligand>
</feature>
<feature type="binding site" evidence="1">
    <location>
        <begin position="324"/>
        <end position="325"/>
    </location>
    <ligand>
        <name>ATP</name>
        <dbReference type="ChEBI" id="CHEBI:30616"/>
    </ligand>
</feature>
<feature type="binding site" evidence="1">
    <location>
        <begin position="439"/>
        <end position="443"/>
    </location>
    <ligand>
        <name>substrate</name>
    </ligand>
</feature>
<feature type="binding site" evidence="1">
    <location>
        <begin position="443"/>
        <end position="446"/>
    </location>
    <ligand>
        <name>ATP</name>
        <dbReference type="ChEBI" id="CHEBI:30616"/>
    </ligand>
</feature>
<accession>Q9V176</accession>
<accession>G8ZJ14</accession>
<sequence>MGERFDKYEYLQDLMRRRGFAWGSFEIYGGSRGFYDYGPLGATIKRKIEKKIREAFIREGFFEIETPDITPEQVFIASGHVEKFVDPIVECKKCGARFRADHLIEETLGIDVEGKSAEEMTKIIREHNIKCPECGGELGDVFYFNLMFETYIGPYKDKKAYLRPETAQGIFVNFKRLNAFARNKLPFGVFQIGKAYRNEISPRQGMIRLREFTQAEVEIFFNPNETEHPHFDEVKHEKLRLYPIENQLKDLGMIELTAEEAVKKGYLMNTFFAYYLVMIKKILLDIGIPEDKIRFRQQLPEERAHYSADTWDAEVYSERFGWVECVGLAYRTDYDLSRHMKMSGADLTVMIHYDKPKIVKRLKVSLNMKSVGPKLKKDAKRINEKIQAMSEEELRELVKKLNEEGKIVIDGYELSKDDFIIKEVEEKVTGEKIIPHVLEPSFGIDRPFYLLLENSLTIDEDGRIYLKIKKDMAPIEVAVLPLVAKEPLTKIAYDLFRKLQKEGFIVVYDEKDSIGKRYMRYDEIGTPYCVTIDNQTPIDGTVTIRDRDTREQIRVKLEDVPRKLKELIFGS</sequence>
<protein>
    <recommendedName>
        <fullName evidence="1">Glycine--tRNA ligase</fullName>
        <ecNumber evidence="1">6.1.1.14</ecNumber>
    </recommendedName>
    <alternativeName>
        <fullName evidence="1">Glycyl-tRNA synthetase</fullName>
        <shortName evidence="1">GlyRS</shortName>
    </alternativeName>
</protein>
<name>SYG_PYRAB</name>
<dbReference type="EC" id="6.1.1.14" evidence="1"/>
<dbReference type="EMBL" id="AJ248284">
    <property type="protein sequence ID" value="CAB49474.1"/>
    <property type="molecule type" value="Genomic_DNA"/>
</dbReference>
<dbReference type="EMBL" id="HE613800">
    <property type="protein sequence ID" value="CCE69941.1"/>
    <property type="molecule type" value="Genomic_DNA"/>
</dbReference>
<dbReference type="PIR" id="C75174">
    <property type="entry name" value="C75174"/>
</dbReference>
<dbReference type="RefSeq" id="WP_010867676.1">
    <property type="nucleotide sequence ID" value="NC_000868.1"/>
</dbReference>
<dbReference type="SMR" id="Q9V176"/>
<dbReference type="STRING" id="272844.PAB0380"/>
<dbReference type="KEGG" id="pab:PAB0380"/>
<dbReference type="PATRIC" id="fig|272844.11.peg.587"/>
<dbReference type="eggNOG" id="arCOG00405">
    <property type="taxonomic scope" value="Archaea"/>
</dbReference>
<dbReference type="HOGENOM" id="CLU_015515_2_1_2"/>
<dbReference type="OrthoDB" id="6113at2157"/>
<dbReference type="PhylomeDB" id="Q9V176"/>
<dbReference type="Proteomes" id="UP000000810">
    <property type="component" value="Chromosome"/>
</dbReference>
<dbReference type="Proteomes" id="UP000009139">
    <property type="component" value="Chromosome"/>
</dbReference>
<dbReference type="GO" id="GO:0005737">
    <property type="term" value="C:cytoplasm"/>
    <property type="evidence" value="ECO:0007669"/>
    <property type="project" value="UniProtKB-SubCell"/>
</dbReference>
<dbReference type="GO" id="GO:0005524">
    <property type="term" value="F:ATP binding"/>
    <property type="evidence" value="ECO:0007669"/>
    <property type="project" value="UniProtKB-UniRule"/>
</dbReference>
<dbReference type="GO" id="GO:0004820">
    <property type="term" value="F:glycine-tRNA ligase activity"/>
    <property type="evidence" value="ECO:0000250"/>
    <property type="project" value="UniProtKB"/>
</dbReference>
<dbReference type="GO" id="GO:0046983">
    <property type="term" value="F:protein dimerization activity"/>
    <property type="evidence" value="ECO:0000250"/>
    <property type="project" value="UniProtKB"/>
</dbReference>
<dbReference type="GO" id="GO:0006426">
    <property type="term" value="P:glycyl-tRNA aminoacylation"/>
    <property type="evidence" value="ECO:0007669"/>
    <property type="project" value="UniProtKB-UniRule"/>
</dbReference>
<dbReference type="CDD" id="cd00774">
    <property type="entry name" value="GlyRS-like_core"/>
    <property type="match status" value="1"/>
</dbReference>
<dbReference type="CDD" id="cd00858">
    <property type="entry name" value="GlyRS_anticodon"/>
    <property type="match status" value="1"/>
</dbReference>
<dbReference type="FunFam" id="3.30.40.230:FF:000005">
    <property type="entry name" value="Glycine--tRNA ligase"/>
    <property type="match status" value="1"/>
</dbReference>
<dbReference type="FunFam" id="3.30.930.10:FF:000091">
    <property type="entry name" value="Glycine--tRNA ligase"/>
    <property type="match status" value="1"/>
</dbReference>
<dbReference type="FunFam" id="3.30.930.10:FF:000179">
    <property type="entry name" value="Glycine--tRNA ligase"/>
    <property type="match status" value="1"/>
</dbReference>
<dbReference type="FunFam" id="3.40.50.800:FF:000002">
    <property type="entry name" value="Glycine--tRNA ligase"/>
    <property type="match status" value="1"/>
</dbReference>
<dbReference type="FunFam" id="3.30.720.200:FF:000001">
    <property type="entry name" value="Glycine--tRNA ligase 2"/>
    <property type="match status" value="1"/>
</dbReference>
<dbReference type="Gene3D" id="3.30.720.200">
    <property type="match status" value="1"/>
</dbReference>
<dbReference type="Gene3D" id="3.40.50.800">
    <property type="entry name" value="Anticodon-binding domain"/>
    <property type="match status" value="1"/>
</dbReference>
<dbReference type="Gene3D" id="3.30.930.10">
    <property type="entry name" value="Bira Bifunctional Protein, Domain 2"/>
    <property type="match status" value="2"/>
</dbReference>
<dbReference type="HAMAP" id="MF_00253_A">
    <property type="entry name" value="Gly_tRNA_synth_A"/>
    <property type="match status" value="1"/>
</dbReference>
<dbReference type="InterPro" id="IPR002314">
    <property type="entry name" value="aa-tRNA-synt_IIb"/>
</dbReference>
<dbReference type="InterPro" id="IPR006195">
    <property type="entry name" value="aa-tRNA-synth_II"/>
</dbReference>
<dbReference type="InterPro" id="IPR045864">
    <property type="entry name" value="aa-tRNA-synth_II/BPL/LPL"/>
</dbReference>
<dbReference type="InterPro" id="IPR004154">
    <property type="entry name" value="Anticodon-bd"/>
</dbReference>
<dbReference type="InterPro" id="IPR036621">
    <property type="entry name" value="Anticodon-bd_dom_sf"/>
</dbReference>
<dbReference type="InterPro" id="IPR027031">
    <property type="entry name" value="Gly-tRNA_synthase/POLG2"/>
</dbReference>
<dbReference type="InterPro" id="IPR022960">
    <property type="entry name" value="Gly_tRNA_ligase_arc"/>
</dbReference>
<dbReference type="InterPro" id="IPR033731">
    <property type="entry name" value="GlyRS-like_core"/>
</dbReference>
<dbReference type="InterPro" id="IPR002315">
    <property type="entry name" value="tRNA-synt_gly"/>
</dbReference>
<dbReference type="NCBIfam" id="TIGR00389">
    <property type="entry name" value="glyS_dimeric"/>
    <property type="match status" value="1"/>
</dbReference>
<dbReference type="NCBIfam" id="NF003211">
    <property type="entry name" value="PRK04173.1"/>
    <property type="match status" value="1"/>
</dbReference>
<dbReference type="PANTHER" id="PTHR10745:SF0">
    <property type="entry name" value="GLYCINE--TRNA LIGASE"/>
    <property type="match status" value="1"/>
</dbReference>
<dbReference type="PANTHER" id="PTHR10745">
    <property type="entry name" value="GLYCYL-TRNA SYNTHETASE/DNA POLYMERASE SUBUNIT GAMMA-2"/>
    <property type="match status" value="1"/>
</dbReference>
<dbReference type="Pfam" id="PF03129">
    <property type="entry name" value="HGTP_anticodon"/>
    <property type="match status" value="1"/>
</dbReference>
<dbReference type="Pfam" id="PF00587">
    <property type="entry name" value="tRNA-synt_2b"/>
    <property type="match status" value="1"/>
</dbReference>
<dbReference type="PRINTS" id="PR01043">
    <property type="entry name" value="TRNASYNTHGLY"/>
</dbReference>
<dbReference type="SUPFAM" id="SSF52954">
    <property type="entry name" value="Class II aaRS ABD-related"/>
    <property type="match status" value="1"/>
</dbReference>
<dbReference type="SUPFAM" id="SSF55681">
    <property type="entry name" value="Class II aaRS and biotin synthetases"/>
    <property type="match status" value="1"/>
</dbReference>
<dbReference type="PROSITE" id="PS50862">
    <property type="entry name" value="AA_TRNA_LIGASE_II"/>
    <property type="match status" value="1"/>
</dbReference>
<reference key="1">
    <citation type="journal article" date="2003" name="Mol. Microbiol.">
        <title>An integrated analysis of the genome of the hyperthermophilic archaeon Pyrococcus abyssi.</title>
        <authorList>
            <person name="Cohen G.N."/>
            <person name="Barbe V."/>
            <person name="Flament D."/>
            <person name="Galperin M."/>
            <person name="Heilig R."/>
            <person name="Lecompte O."/>
            <person name="Poch O."/>
            <person name="Prieur D."/>
            <person name="Querellou J."/>
            <person name="Ripp R."/>
            <person name="Thierry J.-C."/>
            <person name="Van der Oost J."/>
            <person name="Weissenbach J."/>
            <person name="Zivanovic Y."/>
            <person name="Forterre P."/>
        </authorList>
    </citation>
    <scope>NUCLEOTIDE SEQUENCE [LARGE SCALE GENOMIC DNA]</scope>
    <source>
        <strain>GE5 / Orsay</strain>
    </source>
</reference>
<reference key="2">
    <citation type="journal article" date="2012" name="Curr. Microbiol.">
        <title>Re-annotation of two hyperthermophilic archaea Pyrococcus abyssi GE5 and Pyrococcus furiosus DSM 3638.</title>
        <authorList>
            <person name="Gao J."/>
            <person name="Wang J."/>
        </authorList>
    </citation>
    <scope>GENOME REANNOTATION</scope>
    <source>
        <strain>GE5 / Orsay</strain>
    </source>
</reference>
<keyword id="KW-0030">Aminoacyl-tRNA synthetase</keyword>
<keyword id="KW-0067">ATP-binding</keyword>
<keyword id="KW-0963">Cytoplasm</keyword>
<keyword id="KW-0436">Ligase</keyword>
<keyword id="KW-0547">Nucleotide-binding</keyword>
<keyword id="KW-0648">Protein biosynthesis</keyword>